<organism>
    <name type="scientific">Trypanosoma cruzi (strain CL Brener)</name>
    <dbReference type="NCBI Taxonomy" id="353153"/>
    <lineage>
        <taxon>Eukaryota</taxon>
        <taxon>Discoba</taxon>
        <taxon>Euglenozoa</taxon>
        <taxon>Kinetoplastea</taxon>
        <taxon>Metakinetoplastina</taxon>
        <taxon>Trypanosomatida</taxon>
        <taxon>Trypanosomatidae</taxon>
        <taxon>Trypanosoma</taxon>
        <taxon>Schizotrypanum</taxon>
    </lineage>
</organism>
<name>PURA2_TRYCC</name>
<gene>
    <name type="ORF">Tc00.1047053508731.60</name>
</gene>
<reference key="1">
    <citation type="journal article" date="2005" name="Science">
        <title>The genome sequence of Trypanosoma cruzi, etiologic agent of Chagas disease.</title>
        <authorList>
            <person name="El-Sayed N.M.A."/>
            <person name="Myler P.J."/>
            <person name="Bartholomeu D.C."/>
            <person name="Nilsson D."/>
            <person name="Aggarwal G."/>
            <person name="Tran A.-N."/>
            <person name="Ghedin E."/>
            <person name="Worthey E.A."/>
            <person name="Delcher A.L."/>
            <person name="Blandin G."/>
            <person name="Westenberger S.J."/>
            <person name="Caler E."/>
            <person name="Cerqueira G.C."/>
            <person name="Branche C."/>
            <person name="Haas B."/>
            <person name="Anupama A."/>
            <person name="Arner E."/>
            <person name="Aslund L."/>
            <person name="Attipoe P."/>
            <person name="Bontempi E."/>
            <person name="Bringaud F."/>
            <person name="Burton P."/>
            <person name="Cadag E."/>
            <person name="Campbell D.A."/>
            <person name="Carrington M."/>
            <person name="Crabtree J."/>
            <person name="Darban H."/>
            <person name="da Silveira J.F."/>
            <person name="de Jong P."/>
            <person name="Edwards K."/>
            <person name="Englund P.T."/>
            <person name="Fazelina G."/>
            <person name="Feldblyum T."/>
            <person name="Ferella M."/>
            <person name="Frasch A.C."/>
            <person name="Gull K."/>
            <person name="Horn D."/>
            <person name="Hou L."/>
            <person name="Huang Y."/>
            <person name="Kindlund E."/>
            <person name="Klingbeil M."/>
            <person name="Kluge S."/>
            <person name="Koo H."/>
            <person name="Lacerda D."/>
            <person name="Levin M.J."/>
            <person name="Lorenzi H."/>
            <person name="Louie T."/>
            <person name="Machado C.R."/>
            <person name="McCulloch R."/>
            <person name="McKenna A."/>
            <person name="Mizuno Y."/>
            <person name="Mottram J.C."/>
            <person name="Nelson S."/>
            <person name="Ochaya S."/>
            <person name="Osoegawa K."/>
            <person name="Pai G."/>
            <person name="Parsons M."/>
            <person name="Pentony M."/>
            <person name="Pettersson U."/>
            <person name="Pop M."/>
            <person name="Ramirez J.L."/>
            <person name="Rinta J."/>
            <person name="Robertson L."/>
            <person name="Salzberg S.L."/>
            <person name="Sanchez D.O."/>
            <person name="Seyler A."/>
            <person name="Sharma R."/>
            <person name="Shetty J."/>
            <person name="Simpson A.J."/>
            <person name="Sisk E."/>
            <person name="Tammi M.T."/>
            <person name="Tarleton R."/>
            <person name="Teixeira S."/>
            <person name="Van Aken S."/>
            <person name="Vogt C."/>
            <person name="Ward P.N."/>
            <person name="Wickstead B."/>
            <person name="Wortman J."/>
            <person name="White O."/>
            <person name="Fraser C.M."/>
            <person name="Stuart K.D."/>
            <person name="Andersson B."/>
        </authorList>
    </citation>
    <scope>NUCLEOTIDE SEQUENCE [LARGE SCALE GENOMIC DNA]</scope>
    <source>
        <strain>CL Brener</strain>
    </source>
</reference>
<sequence>MDKQAERDQSAGPVKTPQETQPPAHNYTYHTNAAQRAVYDYLKNVKPIPELAEPKTYKTYEEASVEAVLYPIIEKHQVIMVAGAFFGDEGKGKTVNAVANHPGCTFIARVNSGENAGHTVYDDAGRKFVFNLAPSGLLSKGKRNYVGPECVMDPISFMENEVKQLIEANVPYKEQLFIGNVSIVTPYHKLLDLLASAPNSSTLKGMAPIHASKVTKRGIRLDHIFNDQSVLRSRLRKDIDTYFGFLKVKGLSDADVLRRCEKENGDGVVRVPPYVVEFVQAEDKVEYLVKLYMDRVRNNKNFPARCDVAHELRSALSRGEKVMLEGPQSYWLSNAREKFWESTTSADTTASGLLATAQYNFQLYSSVVINVHKAPGSSRVGVGANPSSFVAQDYFSAKGVKTLRDLPENMCVDFDSIQKLFFTKAFHPETKEYNGIWEPLEFEDSTGKYNIGVAMAVASSRHHGECGAVTKKPRVCGFFDCVLQYEVNAVQGPYLSISALDRGDDYDKLGITIAYVYYNGKNNEVLNINGREYKNGDIIKAGEAVPGEAALYYCHPIVKLINGWKQTPIAASKRKPGDPLPRGVCEFLSTVEYFTKAKIISIGNGPRGKDIIYIKQ</sequence>
<dbReference type="EC" id="6.3.4.4" evidence="2"/>
<dbReference type="EMBL" id="AAHK01001594">
    <property type="protein sequence ID" value="EAN84777.1"/>
    <property type="molecule type" value="Genomic_DNA"/>
</dbReference>
<dbReference type="RefSeq" id="XP_806628.1">
    <property type="nucleotide sequence ID" value="XM_801535.1"/>
</dbReference>
<dbReference type="SMR" id="Q4CWX1"/>
<dbReference type="FunCoup" id="Q4CWX1">
    <property type="interactions" value="631"/>
</dbReference>
<dbReference type="STRING" id="353153.Q4CWX1"/>
<dbReference type="PaxDb" id="353153-Q4CWX1"/>
<dbReference type="EnsemblProtists" id="EAN84777">
    <property type="protein sequence ID" value="EAN84777"/>
    <property type="gene ID" value="Tc00.1047053508731.60"/>
</dbReference>
<dbReference type="GeneID" id="3536681"/>
<dbReference type="KEGG" id="tcr:508731.60"/>
<dbReference type="eggNOG" id="KOG1355">
    <property type="taxonomic scope" value="Eukaryota"/>
</dbReference>
<dbReference type="InParanoid" id="Q4CWX1"/>
<dbReference type="OMA" id="YIGPECV"/>
<dbReference type="UniPathway" id="UPA00075">
    <property type="reaction ID" value="UER00335"/>
</dbReference>
<dbReference type="Proteomes" id="UP000002296">
    <property type="component" value="Unassembled WGS sequence"/>
</dbReference>
<dbReference type="GO" id="GO:0005737">
    <property type="term" value="C:cytoplasm"/>
    <property type="evidence" value="ECO:0007669"/>
    <property type="project" value="UniProtKB-SubCell"/>
</dbReference>
<dbReference type="GO" id="GO:0004019">
    <property type="term" value="F:adenylosuccinate synthase activity"/>
    <property type="evidence" value="ECO:0007669"/>
    <property type="project" value="UniProtKB-UniRule"/>
</dbReference>
<dbReference type="GO" id="GO:0005525">
    <property type="term" value="F:GTP binding"/>
    <property type="evidence" value="ECO:0007669"/>
    <property type="project" value="UniProtKB-UniRule"/>
</dbReference>
<dbReference type="GO" id="GO:0000287">
    <property type="term" value="F:magnesium ion binding"/>
    <property type="evidence" value="ECO:0007669"/>
    <property type="project" value="UniProtKB-UniRule"/>
</dbReference>
<dbReference type="GO" id="GO:0044208">
    <property type="term" value="P:'de novo' AMP biosynthetic process"/>
    <property type="evidence" value="ECO:0007669"/>
    <property type="project" value="UniProtKB-UniRule"/>
</dbReference>
<dbReference type="GO" id="GO:0046040">
    <property type="term" value="P:IMP metabolic process"/>
    <property type="evidence" value="ECO:0007669"/>
    <property type="project" value="TreeGrafter"/>
</dbReference>
<dbReference type="FunFam" id="3.90.170.10:FF:000003">
    <property type="entry name" value="Adenylosuccinate synthetase"/>
    <property type="match status" value="1"/>
</dbReference>
<dbReference type="Gene3D" id="3.40.440.10">
    <property type="entry name" value="Adenylosuccinate Synthetase, subunit A, domain 1"/>
    <property type="match status" value="1"/>
</dbReference>
<dbReference type="Gene3D" id="1.10.300.10">
    <property type="entry name" value="Adenylosuccinate Synthetase, subunit A, domain 2"/>
    <property type="match status" value="1"/>
</dbReference>
<dbReference type="Gene3D" id="3.90.170.10">
    <property type="entry name" value="Adenylosuccinate Synthetase, subunit A, domain 3"/>
    <property type="match status" value="1"/>
</dbReference>
<dbReference type="HAMAP" id="MF_00011">
    <property type="entry name" value="Adenylosucc_synth"/>
    <property type="match status" value="1"/>
</dbReference>
<dbReference type="InterPro" id="IPR018220">
    <property type="entry name" value="Adenylosuccin_syn_GTP-bd"/>
</dbReference>
<dbReference type="InterPro" id="IPR042109">
    <property type="entry name" value="Adenylosuccinate_synth_dom1"/>
</dbReference>
<dbReference type="InterPro" id="IPR042110">
    <property type="entry name" value="Adenylosuccinate_synth_dom2"/>
</dbReference>
<dbReference type="InterPro" id="IPR042111">
    <property type="entry name" value="Adenylosuccinate_synth_dom3"/>
</dbReference>
<dbReference type="InterPro" id="IPR001114">
    <property type="entry name" value="Adenylosuccinate_synthetase"/>
</dbReference>
<dbReference type="InterPro" id="IPR027417">
    <property type="entry name" value="P-loop_NTPase"/>
</dbReference>
<dbReference type="PANTHER" id="PTHR11846">
    <property type="entry name" value="ADENYLOSUCCINATE SYNTHETASE"/>
    <property type="match status" value="1"/>
</dbReference>
<dbReference type="PANTHER" id="PTHR11846:SF0">
    <property type="entry name" value="ADENYLOSUCCINATE SYNTHETASE"/>
    <property type="match status" value="1"/>
</dbReference>
<dbReference type="Pfam" id="PF00709">
    <property type="entry name" value="Adenylsucc_synt"/>
    <property type="match status" value="1"/>
</dbReference>
<dbReference type="SMART" id="SM00788">
    <property type="entry name" value="Adenylsucc_synt"/>
    <property type="match status" value="1"/>
</dbReference>
<dbReference type="SUPFAM" id="SSF52540">
    <property type="entry name" value="P-loop containing nucleoside triphosphate hydrolases"/>
    <property type="match status" value="1"/>
</dbReference>
<dbReference type="PROSITE" id="PS01266">
    <property type="entry name" value="ADENYLOSUCCIN_SYN_1"/>
    <property type="match status" value="1"/>
</dbReference>
<comment type="function">
    <text evidence="1">Plays an important role in the salvage pathway for purine nucleotide biosynthesis. Catalyzes the first committed step in the biosynthesis of AMP from IMP (By similarity).</text>
</comment>
<comment type="catalytic activity">
    <reaction evidence="2">
        <text>IMP + L-aspartate + GTP = N(6)-(1,2-dicarboxyethyl)-AMP + GDP + phosphate + 2 H(+)</text>
        <dbReference type="Rhea" id="RHEA:15753"/>
        <dbReference type="ChEBI" id="CHEBI:15378"/>
        <dbReference type="ChEBI" id="CHEBI:29991"/>
        <dbReference type="ChEBI" id="CHEBI:37565"/>
        <dbReference type="ChEBI" id="CHEBI:43474"/>
        <dbReference type="ChEBI" id="CHEBI:57567"/>
        <dbReference type="ChEBI" id="CHEBI:58053"/>
        <dbReference type="ChEBI" id="CHEBI:58189"/>
        <dbReference type="EC" id="6.3.4.4"/>
    </reaction>
</comment>
<comment type="cofactor">
    <cofactor evidence="2">
        <name>Mg(2+)</name>
        <dbReference type="ChEBI" id="CHEBI:18420"/>
    </cofactor>
    <text evidence="2">Binds 1 Mg(2+) ion per subunit.</text>
</comment>
<comment type="pathway">
    <text evidence="2">Purine metabolism; AMP biosynthesis via de novo pathway; AMP from IMP: step 1/2.</text>
</comment>
<comment type="subunit">
    <text evidence="2">Homodimer.</text>
</comment>
<comment type="subcellular location">
    <subcellularLocation>
        <location evidence="2">Cytoplasm</location>
    </subcellularLocation>
</comment>
<comment type="miscellaneous">
    <text>Parasitic protozoa lack the de novo purine biosynthesis pathway and rely exclusively on the salvage pathway for their purine nucleotide requirements.</text>
</comment>
<comment type="similarity">
    <text evidence="2">Belongs to the adenylosuccinate synthetase family.</text>
</comment>
<feature type="chain" id="PRO_0000399308" description="Adenylosuccinate synthetase 2">
    <location>
        <begin position="1"/>
        <end position="616"/>
    </location>
</feature>
<feature type="region of interest" description="Disordered" evidence="3">
    <location>
        <begin position="1"/>
        <end position="26"/>
    </location>
</feature>
<feature type="compositionally biased region" description="Polar residues" evidence="3">
    <location>
        <begin position="17"/>
        <end position="26"/>
    </location>
</feature>
<feature type="active site" description="Proton acceptor" evidence="2">
    <location>
        <position position="88"/>
    </location>
</feature>
<feature type="active site" description="Proton donor" evidence="2">
    <location>
        <position position="118"/>
    </location>
</feature>
<feature type="binding site" evidence="2">
    <location>
        <begin position="87"/>
        <end position="93"/>
    </location>
    <ligand>
        <name>GTP</name>
        <dbReference type="ChEBI" id="CHEBI:37565"/>
    </ligand>
</feature>
<feature type="binding site" description="in other chain" evidence="2">
    <location>
        <begin position="88"/>
        <end position="91"/>
    </location>
    <ligand>
        <name>IMP</name>
        <dbReference type="ChEBI" id="CHEBI:58053"/>
        <note>ligand shared between dimeric partners</note>
    </ligand>
</feature>
<feature type="binding site" evidence="2">
    <location>
        <position position="88"/>
    </location>
    <ligand>
        <name>Mg(2+)</name>
        <dbReference type="ChEBI" id="CHEBI:18420"/>
    </ligand>
</feature>
<feature type="binding site" description="in other chain" evidence="2">
    <location>
        <begin position="115"/>
        <end position="118"/>
    </location>
    <ligand>
        <name>IMP</name>
        <dbReference type="ChEBI" id="CHEBI:58053"/>
        <note>ligand shared between dimeric partners</note>
    </ligand>
</feature>
<feature type="binding site" evidence="2">
    <location>
        <begin position="117"/>
        <end position="119"/>
    </location>
    <ligand>
        <name>GTP</name>
        <dbReference type="ChEBI" id="CHEBI:37565"/>
    </ligand>
</feature>
<feature type="binding site" evidence="2">
    <location>
        <position position="117"/>
    </location>
    <ligand>
        <name>Mg(2+)</name>
        <dbReference type="ChEBI" id="CHEBI:18420"/>
    </ligand>
</feature>
<feature type="binding site" description="in other chain" evidence="2">
    <location>
        <position position="202"/>
    </location>
    <ligand>
        <name>IMP</name>
        <dbReference type="ChEBI" id="CHEBI:58053"/>
        <note>ligand shared between dimeric partners</note>
    </ligand>
</feature>
<feature type="binding site" evidence="2">
    <location>
        <position position="216"/>
    </location>
    <ligand>
        <name>IMP</name>
        <dbReference type="ChEBI" id="CHEBI:58053"/>
        <note>ligand shared between dimeric partners</note>
    </ligand>
</feature>
<feature type="binding site" description="in other chain" evidence="2">
    <location>
        <position position="328"/>
    </location>
    <ligand>
        <name>IMP</name>
        <dbReference type="ChEBI" id="CHEBI:58053"/>
        <note>ligand shared between dimeric partners</note>
    </ligand>
</feature>
<feature type="binding site" description="in other chain" evidence="2">
    <location>
        <position position="343"/>
    </location>
    <ligand>
        <name>IMP</name>
        <dbReference type="ChEBI" id="CHEBI:58053"/>
        <note>ligand shared between dimeric partners</note>
    </ligand>
</feature>
<feature type="binding site" evidence="2">
    <location>
        <begin position="468"/>
        <end position="474"/>
    </location>
    <ligand>
        <name>substrate</name>
    </ligand>
</feature>
<feature type="binding site" description="in other chain" evidence="2">
    <location>
        <position position="472"/>
    </location>
    <ligand>
        <name>IMP</name>
        <dbReference type="ChEBI" id="CHEBI:58053"/>
        <note>ligand shared between dimeric partners</note>
    </ligand>
</feature>
<feature type="binding site" evidence="2">
    <location>
        <position position="474"/>
    </location>
    <ligand>
        <name>GTP</name>
        <dbReference type="ChEBI" id="CHEBI:37565"/>
    </ligand>
</feature>
<feature type="binding site" evidence="2">
    <location>
        <begin position="603"/>
        <end position="605"/>
    </location>
    <ligand>
        <name>GTP</name>
        <dbReference type="ChEBI" id="CHEBI:37565"/>
    </ligand>
</feature>
<proteinExistence type="inferred from homology"/>
<evidence type="ECO:0000250" key="1"/>
<evidence type="ECO:0000255" key="2">
    <source>
        <dbReference type="HAMAP-Rule" id="MF_03125"/>
    </source>
</evidence>
<evidence type="ECO:0000256" key="3">
    <source>
        <dbReference type="SAM" id="MobiDB-lite"/>
    </source>
</evidence>
<protein>
    <recommendedName>
        <fullName evidence="2">Adenylosuccinate synthetase 2</fullName>
        <shortName evidence="2">AMPSase 2</shortName>
        <shortName evidence="2">AdSS 2</shortName>
        <ecNumber evidence="2">6.3.4.4</ecNumber>
    </recommendedName>
    <alternativeName>
        <fullName evidence="2">IMP--aspartate ligase 2</fullName>
    </alternativeName>
</protein>
<keyword id="KW-0963">Cytoplasm</keyword>
<keyword id="KW-0342">GTP-binding</keyword>
<keyword id="KW-0436">Ligase</keyword>
<keyword id="KW-0460">Magnesium</keyword>
<keyword id="KW-0479">Metal-binding</keyword>
<keyword id="KW-0547">Nucleotide-binding</keyword>
<keyword id="KW-0658">Purine biosynthesis</keyword>
<keyword id="KW-1185">Reference proteome</keyword>
<accession>Q4CWX1</accession>